<name>PRTE_DICNO</name>
<keyword id="KW-0378">Hydrolase</keyword>
<keyword id="KW-0645">Protease</keyword>
<keyword id="KW-0720">Serine protease</keyword>
<keyword id="KW-0732">Signal</keyword>
<feature type="signal peptide" evidence="1">
    <location>
        <begin position="1"/>
        <end position="20"/>
    </location>
</feature>
<feature type="chain" id="PRO_0000028518" description="Extracellular serine protease">
    <location>
        <begin position="21"/>
        <end position="448" status="greater than"/>
    </location>
</feature>
<feature type="region of interest" description="Disordered" evidence="2">
    <location>
        <begin position="87"/>
        <end position="109"/>
    </location>
</feature>
<feature type="non-terminal residue">
    <location>
        <position position="448"/>
    </location>
</feature>
<proteinExistence type="inferred from homology"/>
<evidence type="ECO:0000255" key="1">
    <source>
        <dbReference type="PROSITE-ProRule" id="PRU00303"/>
    </source>
</evidence>
<evidence type="ECO:0000256" key="2">
    <source>
        <dbReference type="SAM" id="MobiDB-lite"/>
    </source>
</evidence>
<evidence type="ECO:0000305" key="3"/>
<gene>
    <name type="primary">prvA</name>
</gene>
<organism>
    <name type="scientific">Dichelobacter nodosus</name>
    <name type="common">Bacteroides nodosus</name>
    <dbReference type="NCBI Taxonomy" id="870"/>
    <lineage>
        <taxon>Bacteria</taxon>
        <taxon>Pseudomonadati</taxon>
        <taxon>Pseudomonadota</taxon>
        <taxon>Gammaproteobacteria</taxon>
        <taxon>Cardiobacteriales</taxon>
        <taxon>Cardiobacteriaceae</taxon>
        <taxon>Dichelobacter</taxon>
    </lineage>
</organism>
<sequence>MKLSHLSLAIISAITLAACGGGNDDKPMPQDPDNGALVEQRNEAIKKKATAYLEDKDGKAPALTKDEEATLSQIDENLFNEYKKKQKELENQASDDEVDPTKTGVVGNLDLGKQASQGTTQYVRGTKSSFDAENNPKEVSSATAILGVEAKTQNPWLTNIVLARKVRADGTVSIMQYLGNDGSDAADFTNVKSLQAQNDHNVVKFSDLKTNKPLDEAKLEAQKKQVDLIIKLYEKIDSSEITTEEKEELEKFVALKEELNAIDIKSPEGYVGLDEKAHKLFSETGASGSDDIIFGDDVPTNNSVLGTADTGSGAIPPVKPIYTSGKPGADATGAGALGLVGMNFKVGGTQEAIQGTEEKSQSSTRVFGRQYNTQSRAERKFNSYADAAVLALSSEKDLANAIAGITDQSELANITADMKNAKINYHLAVKPQKLDYVQYGRVTGNLDP</sequence>
<comment type="function">
    <text>This enzyme is a chymotrypsin-like serine protease. Degrades a variety of substrates present in the skin and hoof of the sheep, including elastin, keratin, fibrinogen and collagen. It seems to play an important role in the pathogenesis of sheep footrot.</text>
</comment>
<comment type="cofactor">
    <cofactor>
        <name>a divalent metal cation</name>
        <dbReference type="ChEBI" id="CHEBI:60240"/>
    </cofactor>
</comment>
<comment type="similarity">
    <text evidence="3">Belongs to the peptidase S17 family.</text>
</comment>
<accession>P19577</accession>
<reference key="1">
    <citation type="journal article" date="1989" name="Gene">
        <title>Molecular analysis of one of multiple protease-encoding genes from the prototype virulent strain of Bacteroides nodosus.</title>
        <authorList>
            <person name="Moses E.K."/>
            <person name="Rood J.I."/>
            <person name="Yong W.K."/>
            <person name="Riffkin G.G."/>
        </authorList>
    </citation>
    <scope>NUCLEOTIDE SEQUENCE [GENOMIC DNA]</scope>
    <source>
        <strain>VCS 1001 / A198</strain>
    </source>
</reference>
<protein>
    <recommendedName>
        <fullName>Extracellular serine protease</fullName>
        <ecNumber>3.4.21.-</ecNumber>
    </recommendedName>
</protein>
<dbReference type="EC" id="3.4.21.-"/>
<dbReference type="EMBL" id="M26969">
    <property type="protein sequence ID" value="AAA72773.1"/>
    <property type="molecule type" value="Genomic_DNA"/>
</dbReference>
<dbReference type="PIR" id="S69783">
    <property type="entry name" value="S69783"/>
</dbReference>
<dbReference type="MEROPS" id="X21.001"/>
<dbReference type="GO" id="GO:0008236">
    <property type="term" value="F:serine-type peptidase activity"/>
    <property type="evidence" value="ECO:0007669"/>
    <property type="project" value="UniProtKB-KW"/>
</dbReference>
<dbReference type="GO" id="GO:0006508">
    <property type="term" value="P:proteolysis"/>
    <property type="evidence" value="ECO:0007669"/>
    <property type="project" value="UniProtKB-KW"/>
</dbReference>
<dbReference type="PROSITE" id="PS51257">
    <property type="entry name" value="PROKAR_LIPOPROTEIN"/>
    <property type="match status" value="1"/>
</dbReference>